<name>METK_STRMU</name>
<feature type="chain" id="PRO_0000174600" description="S-adenosylmethionine synthase">
    <location>
        <begin position="1"/>
        <end position="397"/>
    </location>
</feature>
<feature type="region of interest" description="Flexible loop" evidence="1">
    <location>
        <begin position="100"/>
        <end position="110"/>
    </location>
</feature>
<feature type="binding site" description="in other chain" evidence="1">
    <location>
        <position position="16"/>
    </location>
    <ligand>
        <name>ATP</name>
        <dbReference type="ChEBI" id="CHEBI:30616"/>
        <note>ligand shared between two neighboring subunits</note>
    </ligand>
</feature>
<feature type="binding site" evidence="1">
    <location>
        <position position="18"/>
    </location>
    <ligand>
        <name>Mg(2+)</name>
        <dbReference type="ChEBI" id="CHEBI:18420"/>
    </ligand>
</feature>
<feature type="binding site" evidence="1">
    <location>
        <position position="44"/>
    </location>
    <ligand>
        <name>K(+)</name>
        <dbReference type="ChEBI" id="CHEBI:29103"/>
    </ligand>
</feature>
<feature type="binding site" description="in other chain" evidence="1">
    <location>
        <position position="57"/>
    </location>
    <ligand>
        <name>L-methionine</name>
        <dbReference type="ChEBI" id="CHEBI:57844"/>
        <note>ligand shared between two neighboring subunits</note>
    </ligand>
</feature>
<feature type="binding site" description="in other chain" evidence="1">
    <location>
        <position position="100"/>
    </location>
    <ligand>
        <name>L-methionine</name>
        <dbReference type="ChEBI" id="CHEBI:57844"/>
        <note>ligand shared between two neighboring subunits</note>
    </ligand>
</feature>
<feature type="binding site" description="in other chain" evidence="1">
    <location>
        <begin position="175"/>
        <end position="177"/>
    </location>
    <ligand>
        <name>ATP</name>
        <dbReference type="ChEBI" id="CHEBI:30616"/>
        <note>ligand shared between two neighboring subunits</note>
    </ligand>
</feature>
<feature type="binding site" description="in other chain" evidence="1">
    <location>
        <begin position="242"/>
        <end position="243"/>
    </location>
    <ligand>
        <name>ATP</name>
        <dbReference type="ChEBI" id="CHEBI:30616"/>
        <note>ligand shared between two neighboring subunits</note>
    </ligand>
</feature>
<feature type="binding site" evidence="1">
    <location>
        <position position="251"/>
    </location>
    <ligand>
        <name>ATP</name>
        <dbReference type="ChEBI" id="CHEBI:30616"/>
        <note>ligand shared between two neighboring subunits</note>
    </ligand>
</feature>
<feature type="binding site" evidence="1">
    <location>
        <position position="251"/>
    </location>
    <ligand>
        <name>L-methionine</name>
        <dbReference type="ChEBI" id="CHEBI:57844"/>
        <note>ligand shared between two neighboring subunits</note>
    </ligand>
</feature>
<feature type="binding site" description="in other chain" evidence="1">
    <location>
        <begin position="257"/>
        <end position="258"/>
    </location>
    <ligand>
        <name>ATP</name>
        <dbReference type="ChEBI" id="CHEBI:30616"/>
        <note>ligand shared between two neighboring subunits</note>
    </ligand>
</feature>
<feature type="binding site" evidence="1">
    <location>
        <position position="274"/>
    </location>
    <ligand>
        <name>ATP</name>
        <dbReference type="ChEBI" id="CHEBI:30616"/>
        <note>ligand shared between two neighboring subunits</note>
    </ligand>
</feature>
<feature type="binding site" evidence="1">
    <location>
        <position position="278"/>
    </location>
    <ligand>
        <name>ATP</name>
        <dbReference type="ChEBI" id="CHEBI:30616"/>
        <note>ligand shared between two neighboring subunits</note>
    </ligand>
</feature>
<feature type="binding site" description="in other chain" evidence="1">
    <location>
        <position position="282"/>
    </location>
    <ligand>
        <name>L-methionine</name>
        <dbReference type="ChEBI" id="CHEBI:57844"/>
        <note>ligand shared between two neighboring subunits</note>
    </ligand>
</feature>
<proteinExistence type="inferred from homology"/>
<reference key="1">
    <citation type="journal article" date="2002" name="Proc. Natl. Acad. Sci. U.S.A.">
        <title>Genome sequence of Streptococcus mutans UA159, a cariogenic dental pathogen.</title>
        <authorList>
            <person name="Ajdic D.J."/>
            <person name="McShan W.M."/>
            <person name="McLaughlin R.E."/>
            <person name="Savic G."/>
            <person name="Chang J."/>
            <person name="Carson M.B."/>
            <person name="Primeaux C."/>
            <person name="Tian R."/>
            <person name="Kenton S."/>
            <person name="Jia H.G."/>
            <person name="Lin S.P."/>
            <person name="Qian Y."/>
            <person name="Li S."/>
            <person name="Zhu H."/>
            <person name="Najar F.Z."/>
            <person name="Lai H."/>
            <person name="White J."/>
            <person name="Roe B.A."/>
            <person name="Ferretti J.J."/>
        </authorList>
    </citation>
    <scope>NUCLEOTIDE SEQUENCE [LARGE SCALE GENOMIC DNA]</scope>
    <source>
        <strain>ATCC 700610 / UA159</strain>
    </source>
</reference>
<evidence type="ECO:0000255" key="1">
    <source>
        <dbReference type="HAMAP-Rule" id="MF_00086"/>
    </source>
</evidence>
<protein>
    <recommendedName>
        <fullName evidence="1">S-adenosylmethionine synthase</fullName>
        <shortName evidence="1">AdoMet synthase</shortName>
        <ecNumber evidence="1">2.5.1.6</ecNumber>
    </recommendedName>
    <alternativeName>
        <fullName evidence="1">MAT</fullName>
    </alternativeName>
    <alternativeName>
        <fullName evidence="1">Methionine adenosyltransferase</fullName>
    </alternativeName>
</protein>
<gene>
    <name evidence="1" type="primary">metK</name>
    <name type="ordered locus">SMU_1573</name>
</gene>
<sequence>MSERKLFTSESVSEGHPDKIADQISDAILDAVLVQDPDAHVAAETAVYTGSVHVFGEISTTAYVDINRVVRDTIAEIGYTDTAYGFSAETVGVHPSLVEQSPDIAQGVNEALEVRGHHEQDDLDLIGAGDQGLMFGFAVDETPELMPLPISLAHRLVRKLAELRKSGEIAYLRPDAKSQVTVEYDENDKPVRVDTVVISTQHDPEATNEQIHRDVIEKVIKAVIPAEYLDAKTKYLINPTGRFVIGGPQGDSGLTGRKIIVDTYGGYARHGGGAFSGKDATKVDRSASYAARYIAKNIVAAGLAKKAEVQLAYAIGVAQPVSVRVDTFGTALVAESKLEQAVRQIFDLRPAGIIKMLDLKRPIYRQTAAYGHVGRTDIDLPWEKLDKVEELKKAVQA</sequence>
<keyword id="KW-0067">ATP-binding</keyword>
<keyword id="KW-0963">Cytoplasm</keyword>
<keyword id="KW-0460">Magnesium</keyword>
<keyword id="KW-0479">Metal-binding</keyword>
<keyword id="KW-0547">Nucleotide-binding</keyword>
<keyword id="KW-0554">One-carbon metabolism</keyword>
<keyword id="KW-0630">Potassium</keyword>
<keyword id="KW-1185">Reference proteome</keyword>
<keyword id="KW-0808">Transferase</keyword>
<accession>Q8DT23</accession>
<organism>
    <name type="scientific">Streptococcus mutans serotype c (strain ATCC 700610 / UA159)</name>
    <dbReference type="NCBI Taxonomy" id="210007"/>
    <lineage>
        <taxon>Bacteria</taxon>
        <taxon>Bacillati</taxon>
        <taxon>Bacillota</taxon>
        <taxon>Bacilli</taxon>
        <taxon>Lactobacillales</taxon>
        <taxon>Streptococcaceae</taxon>
        <taxon>Streptococcus</taxon>
    </lineage>
</organism>
<comment type="function">
    <text evidence="1">Catalyzes the formation of S-adenosylmethionine (AdoMet) from methionine and ATP. The overall synthetic reaction is composed of two sequential steps, AdoMet formation and the subsequent tripolyphosphate hydrolysis which occurs prior to release of AdoMet from the enzyme.</text>
</comment>
<comment type="catalytic activity">
    <reaction evidence="1">
        <text>L-methionine + ATP + H2O = S-adenosyl-L-methionine + phosphate + diphosphate</text>
        <dbReference type="Rhea" id="RHEA:21080"/>
        <dbReference type="ChEBI" id="CHEBI:15377"/>
        <dbReference type="ChEBI" id="CHEBI:30616"/>
        <dbReference type="ChEBI" id="CHEBI:33019"/>
        <dbReference type="ChEBI" id="CHEBI:43474"/>
        <dbReference type="ChEBI" id="CHEBI:57844"/>
        <dbReference type="ChEBI" id="CHEBI:59789"/>
        <dbReference type="EC" id="2.5.1.6"/>
    </reaction>
</comment>
<comment type="cofactor">
    <cofactor evidence="1">
        <name>Mg(2+)</name>
        <dbReference type="ChEBI" id="CHEBI:18420"/>
    </cofactor>
    <text evidence="1">Binds 2 divalent ions per subunit.</text>
</comment>
<comment type="cofactor">
    <cofactor evidence="1">
        <name>K(+)</name>
        <dbReference type="ChEBI" id="CHEBI:29103"/>
    </cofactor>
    <text evidence="1">Binds 1 potassium ion per subunit.</text>
</comment>
<comment type="pathway">
    <text evidence="1">Amino-acid biosynthesis; S-adenosyl-L-methionine biosynthesis; S-adenosyl-L-methionine from L-methionine: step 1/1.</text>
</comment>
<comment type="subunit">
    <text evidence="1">Homotetramer; dimer of dimers.</text>
</comment>
<comment type="subcellular location">
    <subcellularLocation>
        <location evidence="1">Cytoplasm</location>
    </subcellularLocation>
</comment>
<comment type="similarity">
    <text evidence="1">Belongs to the AdoMet synthase family.</text>
</comment>
<dbReference type="EC" id="2.5.1.6" evidence="1"/>
<dbReference type="EMBL" id="AE014133">
    <property type="protein sequence ID" value="AAN59218.1"/>
    <property type="molecule type" value="Genomic_DNA"/>
</dbReference>
<dbReference type="RefSeq" id="NP_721912.1">
    <property type="nucleotide sequence ID" value="NC_004350.2"/>
</dbReference>
<dbReference type="RefSeq" id="WP_002262981.1">
    <property type="nucleotide sequence ID" value="NC_004350.2"/>
</dbReference>
<dbReference type="SMR" id="Q8DT23"/>
<dbReference type="STRING" id="210007.SMU_1573"/>
<dbReference type="KEGG" id="smu:SMU_1573"/>
<dbReference type="PATRIC" id="fig|210007.7.peg.1400"/>
<dbReference type="eggNOG" id="COG0192">
    <property type="taxonomic scope" value="Bacteria"/>
</dbReference>
<dbReference type="HOGENOM" id="CLU_041802_1_1_9"/>
<dbReference type="OrthoDB" id="9801686at2"/>
<dbReference type="PhylomeDB" id="Q8DT23"/>
<dbReference type="UniPathway" id="UPA00315">
    <property type="reaction ID" value="UER00080"/>
</dbReference>
<dbReference type="Proteomes" id="UP000002512">
    <property type="component" value="Chromosome"/>
</dbReference>
<dbReference type="GO" id="GO:0005737">
    <property type="term" value="C:cytoplasm"/>
    <property type="evidence" value="ECO:0007669"/>
    <property type="project" value="UniProtKB-SubCell"/>
</dbReference>
<dbReference type="GO" id="GO:0005524">
    <property type="term" value="F:ATP binding"/>
    <property type="evidence" value="ECO:0007669"/>
    <property type="project" value="UniProtKB-UniRule"/>
</dbReference>
<dbReference type="GO" id="GO:0000287">
    <property type="term" value="F:magnesium ion binding"/>
    <property type="evidence" value="ECO:0007669"/>
    <property type="project" value="UniProtKB-UniRule"/>
</dbReference>
<dbReference type="GO" id="GO:0004478">
    <property type="term" value="F:methionine adenosyltransferase activity"/>
    <property type="evidence" value="ECO:0007669"/>
    <property type="project" value="UniProtKB-UniRule"/>
</dbReference>
<dbReference type="GO" id="GO:0006730">
    <property type="term" value="P:one-carbon metabolic process"/>
    <property type="evidence" value="ECO:0007669"/>
    <property type="project" value="UniProtKB-KW"/>
</dbReference>
<dbReference type="GO" id="GO:0006556">
    <property type="term" value="P:S-adenosylmethionine biosynthetic process"/>
    <property type="evidence" value="ECO:0007669"/>
    <property type="project" value="UniProtKB-UniRule"/>
</dbReference>
<dbReference type="CDD" id="cd18079">
    <property type="entry name" value="S-AdoMet_synt"/>
    <property type="match status" value="1"/>
</dbReference>
<dbReference type="FunFam" id="3.30.300.10:FF:000003">
    <property type="entry name" value="S-adenosylmethionine synthase"/>
    <property type="match status" value="1"/>
</dbReference>
<dbReference type="Gene3D" id="3.30.300.10">
    <property type="match status" value="3"/>
</dbReference>
<dbReference type="HAMAP" id="MF_00086">
    <property type="entry name" value="S_AdoMet_synth1"/>
    <property type="match status" value="1"/>
</dbReference>
<dbReference type="InterPro" id="IPR022631">
    <property type="entry name" value="ADOMET_SYNTHASE_CS"/>
</dbReference>
<dbReference type="InterPro" id="IPR022630">
    <property type="entry name" value="S-AdoMet_synt_C"/>
</dbReference>
<dbReference type="InterPro" id="IPR022629">
    <property type="entry name" value="S-AdoMet_synt_central"/>
</dbReference>
<dbReference type="InterPro" id="IPR022628">
    <property type="entry name" value="S-AdoMet_synt_N"/>
</dbReference>
<dbReference type="InterPro" id="IPR002133">
    <property type="entry name" value="S-AdoMet_synthetase"/>
</dbReference>
<dbReference type="InterPro" id="IPR022636">
    <property type="entry name" value="S-AdoMet_synthetase_sfam"/>
</dbReference>
<dbReference type="NCBIfam" id="TIGR01034">
    <property type="entry name" value="metK"/>
    <property type="match status" value="1"/>
</dbReference>
<dbReference type="PANTHER" id="PTHR11964">
    <property type="entry name" value="S-ADENOSYLMETHIONINE SYNTHETASE"/>
    <property type="match status" value="1"/>
</dbReference>
<dbReference type="Pfam" id="PF02773">
    <property type="entry name" value="S-AdoMet_synt_C"/>
    <property type="match status" value="1"/>
</dbReference>
<dbReference type="Pfam" id="PF02772">
    <property type="entry name" value="S-AdoMet_synt_M"/>
    <property type="match status" value="1"/>
</dbReference>
<dbReference type="Pfam" id="PF00438">
    <property type="entry name" value="S-AdoMet_synt_N"/>
    <property type="match status" value="1"/>
</dbReference>
<dbReference type="PIRSF" id="PIRSF000497">
    <property type="entry name" value="MAT"/>
    <property type="match status" value="1"/>
</dbReference>
<dbReference type="SUPFAM" id="SSF55973">
    <property type="entry name" value="S-adenosylmethionine synthetase"/>
    <property type="match status" value="3"/>
</dbReference>
<dbReference type="PROSITE" id="PS00376">
    <property type="entry name" value="ADOMET_SYNTHASE_1"/>
    <property type="match status" value="1"/>
</dbReference>
<dbReference type="PROSITE" id="PS00377">
    <property type="entry name" value="ADOMET_SYNTHASE_2"/>
    <property type="match status" value="1"/>
</dbReference>